<protein>
    <recommendedName>
        <fullName evidence="1">3-phosphoshikimate 1-carboxyvinyltransferase</fullName>
        <ecNumber evidence="1">2.5.1.19</ecNumber>
    </recommendedName>
    <alternativeName>
        <fullName evidence="1">5-enolpyruvylshikimate-3-phosphate synthase</fullName>
        <shortName evidence="1">EPSP synthase</shortName>
        <shortName evidence="1">EPSPS</shortName>
    </alternativeName>
</protein>
<reference key="1">
    <citation type="submission" date="2009-01" db="EMBL/GenBank/DDBJ databases">
        <title>Complete sequence of Geobacter sp. FRC-32.</title>
        <authorList>
            <consortium name="US DOE Joint Genome Institute"/>
            <person name="Lucas S."/>
            <person name="Copeland A."/>
            <person name="Lapidus A."/>
            <person name="Glavina del Rio T."/>
            <person name="Dalin E."/>
            <person name="Tice H."/>
            <person name="Bruce D."/>
            <person name="Goodwin L."/>
            <person name="Pitluck S."/>
            <person name="Saunders E."/>
            <person name="Brettin T."/>
            <person name="Detter J.C."/>
            <person name="Han C."/>
            <person name="Larimer F."/>
            <person name="Land M."/>
            <person name="Hauser L."/>
            <person name="Kyrpides N."/>
            <person name="Ovchinnikova G."/>
            <person name="Kostka J."/>
            <person name="Richardson P."/>
        </authorList>
    </citation>
    <scope>NUCLEOTIDE SEQUENCE [LARGE SCALE GENOMIC DNA]</scope>
    <source>
        <strain>DSM 22248 / JCM 15807 / FRC-32</strain>
    </source>
</reference>
<name>AROA_GEODF</name>
<gene>
    <name evidence="1" type="primary">aroA</name>
    <name type="ordered locus">Geob_2361</name>
</gene>
<accession>B9LZG2</accession>
<proteinExistence type="inferred from homology"/>
<organism>
    <name type="scientific">Geotalea daltonii (strain DSM 22248 / JCM 15807 / FRC-32)</name>
    <name type="common">Geobacter daltonii</name>
    <dbReference type="NCBI Taxonomy" id="316067"/>
    <lineage>
        <taxon>Bacteria</taxon>
        <taxon>Pseudomonadati</taxon>
        <taxon>Thermodesulfobacteriota</taxon>
        <taxon>Desulfuromonadia</taxon>
        <taxon>Geobacterales</taxon>
        <taxon>Geobacteraceae</taxon>
        <taxon>Geotalea</taxon>
    </lineage>
</organism>
<dbReference type="EC" id="2.5.1.19" evidence="1"/>
<dbReference type="EMBL" id="CP001390">
    <property type="protein sequence ID" value="ACM20715.1"/>
    <property type="molecule type" value="Genomic_DNA"/>
</dbReference>
<dbReference type="RefSeq" id="WP_012647444.1">
    <property type="nucleotide sequence ID" value="NC_011979.1"/>
</dbReference>
<dbReference type="SMR" id="B9LZG2"/>
<dbReference type="STRING" id="316067.Geob_2361"/>
<dbReference type="KEGG" id="geo:Geob_2361"/>
<dbReference type="eggNOG" id="COG0128">
    <property type="taxonomic scope" value="Bacteria"/>
</dbReference>
<dbReference type="HOGENOM" id="CLU_024321_0_1_7"/>
<dbReference type="OrthoDB" id="9809920at2"/>
<dbReference type="UniPathway" id="UPA00053">
    <property type="reaction ID" value="UER00089"/>
</dbReference>
<dbReference type="Proteomes" id="UP000007721">
    <property type="component" value="Chromosome"/>
</dbReference>
<dbReference type="GO" id="GO:0005737">
    <property type="term" value="C:cytoplasm"/>
    <property type="evidence" value="ECO:0007669"/>
    <property type="project" value="UniProtKB-SubCell"/>
</dbReference>
<dbReference type="GO" id="GO:0003866">
    <property type="term" value="F:3-phosphoshikimate 1-carboxyvinyltransferase activity"/>
    <property type="evidence" value="ECO:0007669"/>
    <property type="project" value="UniProtKB-UniRule"/>
</dbReference>
<dbReference type="GO" id="GO:0008652">
    <property type="term" value="P:amino acid biosynthetic process"/>
    <property type="evidence" value="ECO:0007669"/>
    <property type="project" value="UniProtKB-KW"/>
</dbReference>
<dbReference type="GO" id="GO:0009073">
    <property type="term" value="P:aromatic amino acid family biosynthetic process"/>
    <property type="evidence" value="ECO:0007669"/>
    <property type="project" value="UniProtKB-KW"/>
</dbReference>
<dbReference type="GO" id="GO:0009423">
    <property type="term" value="P:chorismate biosynthetic process"/>
    <property type="evidence" value="ECO:0007669"/>
    <property type="project" value="UniProtKB-UniRule"/>
</dbReference>
<dbReference type="CDD" id="cd01556">
    <property type="entry name" value="EPSP_synthase"/>
    <property type="match status" value="1"/>
</dbReference>
<dbReference type="FunFam" id="3.65.10.10:FF:000005">
    <property type="entry name" value="3-phosphoshikimate 1-carboxyvinyltransferase"/>
    <property type="match status" value="1"/>
</dbReference>
<dbReference type="FunFam" id="3.65.10.10:FF:000006">
    <property type="entry name" value="3-phosphoshikimate 1-carboxyvinyltransferase"/>
    <property type="match status" value="1"/>
</dbReference>
<dbReference type="Gene3D" id="3.65.10.10">
    <property type="entry name" value="Enolpyruvate transferase domain"/>
    <property type="match status" value="2"/>
</dbReference>
<dbReference type="HAMAP" id="MF_00210">
    <property type="entry name" value="EPSP_synth"/>
    <property type="match status" value="1"/>
</dbReference>
<dbReference type="InterPro" id="IPR001986">
    <property type="entry name" value="Enolpyruvate_Tfrase_dom"/>
</dbReference>
<dbReference type="InterPro" id="IPR036968">
    <property type="entry name" value="Enolpyruvate_Tfrase_sf"/>
</dbReference>
<dbReference type="InterPro" id="IPR006264">
    <property type="entry name" value="EPSP_synthase"/>
</dbReference>
<dbReference type="InterPro" id="IPR023193">
    <property type="entry name" value="EPSP_synthase_CS"/>
</dbReference>
<dbReference type="InterPro" id="IPR013792">
    <property type="entry name" value="RNA3'P_cycl/enolpyr_Trfase_a/b"/>
</dbReference>
<dbReference type="NCBIfam" id="TIGR01356">
    <property type="entry name" value="aroA"/>
    <property type="match status" value="1"/>
</dbReference>
<dbReference type="PANTHER" id="PTHR21090">
    <property type="entry name" value="AROM/DEHYDROQUINATE SYNTHASE"/>
    <property type="match status" value="1"/>
</dbReference>
<dbReference type="PANTHER" id="PTHR21090:SF5">
    <property type="entry name" value="PENTAFUNCTIONAL AROM POLYPEPTIDE"/>
    <property type="match status" value="1"/>
</dbReference>
<dbReference type="Pfam" id="PF00275">
    <property type="entry name" value="EPSP_synthase"/>
    <property type="match status" value="1"/>
</dbReference>
<dbReference type="PIRSF" id="PIRSF000505">
    <property type="entry name" value="EPSPS"/>
    <property type="match status" value="1"/>
</dbReference>
<dbReference type="SUPFAM" id="SSF55205">
    <property type="entry name" value="EPT/RTPC-like"/>
    <property type="match status" value="1"/>
</dbReference>
<dbReference type="PROSITE" id="PS00104">
    <property type="entry name" value="EPSP_SYNTHASE_1"/>
    <property type="match status" value="1"/>
</dbReference>
<dbReference type="PROSITE" id="PS00885">
    <property type="entry name" value="EPSP_SYNTHASE_2"/>
    <property type="match status" value="1"/>
</dbReference>
<evidence type="ECO:0000255" key="1">
    <source>
        <dbReference type="HAMAP-Rule" id="MF_00210"/>
    </source>
</evidence>
<keyword id="KW-0028">Amino-acid biosynthesis</keyword>
<keyword id="KW-0057">Aromatic amino acid biosynthesis</keyword>
<keyword id="KW-0963">Cytoplasm</keyword>
<keyword id="KW-1185">Reference proteome</keyword>
<keyword id="KW-0808">Transferase</keyword>
<feature type="chain" id="PRO_1000124688" description="3-phosphoshikimate 1-carboxyvinyltransferase">
    <location>
        <begin position="1"/>
        <end position="429"/>
    </location>
</feature>
<feature type="active site" description="Proton acceptor" evidence="1">
    <location>
        <position position="315"/>
    </location>
</feature>
<feature type="binding site" evidence="1">
    <location>
        <position position="22"/>
    </location>
    <ligand>
        <name>3-phosphoshikimate</name>
        <dbReference type="ChEBI" id="CHEBI:145989"/>
    </ligand>
</feature>
<feature type="binding site" evidence="1">
    <location>
        <position position="22"/>
    </location>
    <ligand>
        <name>phosphoenolpyruvate</name>
        <dbReference type="ChEBI" id="CHEBI:58702"/>
    </ligand>
</feature>
<feature type="binding site" evidence="1">
    <location>
        <position position="23"/>
    </location>
    <ligand>
        <name>3-phosphoshikimate</name>
        <dbReference type="ChEBI" id="CHEBI:145989"/>
    </ligand>
</feature>
<feature type="binding site" evidence="1">
    <location>
        <position position="27"/>
    </location>
    <ligand>
        <name>3-phosphoshikimate</name>
        <dbReference type="ChEBI" id="CHEBI:145989"/>
    </ligand>
</feature>
<feature type="binding site" evidence="1">
    <location>
        <position position="94"/>
    </location>
    <ligand>
        <name>phosphoenolpyruvate</name>
        <dbReference type="ChEBI" id="CHEBI:58702"/>
    </ligand>
</feature>
<feature type="binding site" evidence="1">
    <location>
        <position position="122"/>
    </location>
    <ligand>
        <name>phosphoenolpyruvate</name>
        <dbReference type="ChEBI" id="CHEBI:58702"/>
    </ligand>
</feature>
<feature type="binding site" evidence="1">
    <location>
        <position position="167"/>
    </location>
    <ligand>
        <name>3-phosphoshikimate</name>
        <dbReference type="ChEBI" id="CHEBI:145989"/>
    </ligand>
</feature>
<feature type="binding site" evidence="1">
    <location>
        <position position="169"/>
    </location>
    <ligand>
        <name>3-phosphoshikimate</name>
        <dbReference type="ChEBI" id="CHEBI:145989"/>
    </ligand>
</feature>
<feature type="binding site" evidence="1">
    <location>
        <position position="169"/>
    </location>
    <ligand>
        <name>phosphoenolpyruvate</name>
        <dbReference type="ChEBI" id="CHEBI:58702"/>
    </ligand>
</feature>
<feature type="binding site" evidence="1">
    <location>
        <position position="315"/>
    </location>
    <ligand>
        <name>3-phosphoshikimate</name>
        <dbReference type="ChEBI" id="CHEBI:145989"/>
    </ligand>
</feature>
<feature type="binding site" evidence="1">
    <location>
        <position position="342"/>
    </location>
    <ligand>
        <name>3-phosphoshikimate</name>
        <dbReference type="ChEBI" id="CHEBI:145989"/>
    </ligand>
</feature>
<feature type="binding site" evidence="1">
    <location>
        <position position="346"/>
    </location>
    <ligand>
        <name>phosphoenolpyruvate</name>
        <dbReference type="ChEBI" id="CHEBI:58702"/>
    </ligand>
</feature>
<feature type="binding site" evidence="1">
    <location>
        <position position="388"/>
    </location>
    <ligand>
        <name>phosphoenolpyruvate</name>
        <dbReference type="ChEBI" id="CHEBI:58702"/>
    </ligand>
</feature>
<sequence length="429" mass="45553">MQIHTSKPAKTVRGEITVPGDKSISHRSIMLGSLARGITTVKGFLRGEDNLATLNAFRAMGIIVHDDGETLKIEGNGLHGLGEPADVLDCGNSGTSMRLMTGLLSGQRFFSVLTGDQYLRKRPMKRVLEPLNLMGATVFGRAGGDKAPLAIVGTSLKGIAYQSPVSSAQVKSAILLAGMYADGETQVTEPHLSRDHSERILRYFGADIETYSGGTRIRGGRELEGREIIVPGDISSAAFFMVAALIVPGSELLIKGVGVNPTRTGIIDILQAMGGDITLQNCRESSGEPVADILVKSSRLKGIEVGGDLVPRAIDEFPVICVAASLAEGKTVIRDAKELRVKETDRIKAMAFNLQKAGVAVVETENGMDVTGMEKLEGCTAESFGDHRIAMSMLIAGLAARDQITVNDTECIGTSFPNFTALLQGVTVI</sequence>
<comment type="function">
    <text evidence="1">Catalyzes the transfer of the enolpyruvyl moiety of phosphoenolpyruvate (PEP) to the 5-hydroxyl of shikimate-3-phosphate (S3P) to produce enolpyruvyl shikimate-3-phosphate and inorganic phosphate.</text>
</comment>
<comment type="catalytic activity">
    <reaction evidence="1">
        <text>3-phosphoshikimate + phosphoenolpyruvate = 5-O-(1-carboxyvinyl)-3-phosphoshikimate + phosphate</text>
        <dbReference type="Rhea" id="RHEA:21256"/>
        <dbReference type="ChEBI" id="CHEBI:43474"/>
        <dbReference type="ChEBI" id="CHEBI:57701"/>
        <dbReference type="ChEBI" id="CHEBI:58702"/>
        <dbReference type="ChEBI" id="CHEBI:145989"/>
        <dbReference type="EC" id="2.5.1.19"/>
    </reaction>
    <physiologicalReaction direction="left-to-right" evidence="1">
        <dbReference type="Rhea" id="RHEA:21257"/>
    </physiologicalReaction>
</comment>
<comment type="pathway">
    <text evidence="1">Metabolic intermediate biosynthesis; chorismate biosynthesis; chorismate from D-erythrose 4-phosphate and phosphoenolpyruvate: step 6/7.</text>
</comment>
<comment type="subunit">
    <text evidence="1">Monomer.</text>
</comment>
<comment type="subcellular location">
    <subcellularLocation>
        <location evidence="1">Cytoplasm</location>
    </subcellularLocation>
</comment>
<comment type="similarity">
    <text evidence="1">Belongs to the EPSP synthase family.</text>
</comment>